<comment type="similarity">
    <text evidence="1">Belongs to the CinA family.</text>
</comment>
<feature type="chain" id="PRO_1000204322" description="CinA-like protein">
    <location>
        <begin position="1"/>
        <end position="402"/>
    </location>
</feature>
<dbReference type="EMBL" id="CP001114">
    <property type="protein sequence ID" value="ACO46939.1"/>
    <property type="molecule type" value="Genomic_DNA"/>
</dbReference>
<dbReference type="RefSeq" id="WP_012694060.1">
    <property type="nucleotide sequence ID" value="NC_012526.1"/>
</dbReference>
<dbReference type="SMR" id="C1CXY3"/>
<dbReference type="STRING" id="546414.Deide_19430"/>
<dbReference type="PaxDb" id="546414-Deide_19430"/>
<dbReference type="KEGG" id="ddr:Deide_19430"/>
<dbReference type="eggNOG" id="COG1058">
    <property type="taxonomic scope" value="Bacteria"/>
</dbReference>
<dbReference type="eggNOG" id="COG1546">
    <property type="taxonomic scope" value="Bacteria"/>
</dbReference>
<dbReference type="HOGENOM" id="CLU_030805_9_3_0"/>
<dbReference type="OrthoDB" id="9801454at2"/>
<dbReference type="Proteomes" id="UP000002208">
    <property type="component" value="Chromosome"/>
</dbReference>
<dbReference type="CDD" id="cd00885">
    <property type="entry name" value="cinA"/>
    <property type="match status" value="1"/>
</dbReference>
<dbReference type="Gene3D" id="3.30.70.2860">
    <property type="match status" value="1"/>
</dbReference>
<dbReference type="Gene3D" id="3.90.950.20">
    <property type="entry name" value="CinA-like"/>
    <property type="match status" value="1"/>
</dbReference>
<dbReference type="Gene3D" id="3.40.980.10">
    <property type="entry name" value="MoaB/Mog-like domain"/>
    <property type="match status" value="1"/>
</dbReference>
<dbReference type="HAMAP" id="MF_00226_B">
    <property type="entry name" value="CinA_B"/>
    <property type="match status" value="1"/>
</dbReference>
<dbReference type="InterPro" id="IPR050101">
    <property type="entry name" value="CinA"/>
</dbReference>
<dbReference type="InterPro" id="IPR036653">
    <property type="entry name" value="CinA-like_C"/>
</dbReference>
<dbReference type="InterPro" id="IPR008136">
    <property type="entry name" value="CinA_C"/>
</dbReference>
<dbReference type="InterPro" id="IPR041424">
    <property type="entry name" value="CinA_KH"/>
</dbReference>
<dbReference type="InterPro" id="IPR008135">
    <property type="entry name" value="Competence-induced_CinA"/>
</dbReference>
<dbReference type="InterPro" id="IPR036425">
    <property type="entry name" value="MoaB/Mog-like_dom_sf"/>
</dbReference>
<dbReference type="InterPro" id="IPR001453">
    <property type="entry name" value="MoaB/Mog_dom"/>
</dbReference>
<dbReference type="NCBIfam" id="TIGR00200">
    <property type="entry name" value="cinA_nterm"/>
    <property type="match status" value="1"/>
</dbReference>
<dbReference type="NCBIfam" id="TIGR00177">
    <property type="entry name" value="molyb_syn"/>
    <property type="match status" value="1"/>
</dbReference>
<dbReference type="PANTHER" id="PTHR13939">
    <property type="entry name" value="NICOTINAMIDE-NUCLEOTIDE AMIDOHYDROLASE PNCC"/>
    <property type="match status" value="1"/>
</dbReference>
<dbReference type="PANTHER" id="PTHR13939:SF0">
    <property type="entry name" value="NMN AMIDOHYDROLASE-LIKE PROTEIN YFAY"/>
    <property type="match status" value="1"/>
</dbReference>
<dbReference type="Pfam" id="PF02464">
    <property type="entry name" value="CinA"/>
    <property type="match status" value="1"/>
</dbReference>
<dbReference type="Pfam" id="PF18146">
    <property type="entry name" value="CinA_KH"/>
    <property type="match status" value="1"/>
</dbReference>
<dbReference type="Pfam" id="PF00994">
    <property type="entry name" value="MoCF_biosynth"/>
    <property type="match status" value="1"/>
</dbReference>
<dbReference type="PIRSF" id="PIRSF006728">
    <property type="entry name" value="CinA"/>
    <property type="match status" value="1"/>
</dbReference>
<dbReference type="SMART" id="SM00852">
    <property type="entry name" value="MoCF_biosynth"/>
    <property type="match status" value="1"/>
</dbReference>
<dbReference type="SUPFAM" id="SSF142433">
    <property type="entry name" value="CinA-like"/>
    <property type="match status" value="1"/>
</dbReference>
<dbReference type="SUPFAM" id="SSF53218">
    <property type="entry name" value="Molybdenum cofactor biosynthesis proteins"/>
    <property type="match status" value="1"/>
</dbReference>
<reference key="1">
    <citation type="journal article" date="2009" name="PLoS Genet.">
        <title>Alliance of proteomics and genomics to unravel the specificities of Sahara bacterium Deinococcus deserti.</title>
        <authorList>
            <person name="de Groot A."/>
            <person name="Dulermo R."/>
            <person name="Ortet P."/>
            <person name="Blanchard L."/>
            <person name="Guerin P."/>
            <person name="Fernandez B."/>
            <person name="Vacherie B."/>
            <person name="Dossat C."/>
            <person name="Jolivet E."/>
            <person name="Siguier P."/>
            <person name="Chandler M."/>
            <person name="Barakat M."/>
            <person name="Dedieu A."/>
            <person name="Barbe V."/>
            <person name="Heulin T."/>
            <person name="Sommer S."/>
            <person name="Achouak W."/>
            <person name="Armengaud J."/>
        </authorList>
    </citation>
    <scope>NUCLEOTIDE SEQUENCE [LARGE SCALE GENOMIC DNA]</scope>
    <source>
        <strain>DSM 17065 / CIP 109153 / LMG 22923 / VCD115</strain>
    </source>
</reference>
<accession>C1CXY3</accession>
<keyword id="KW-1185">Reference proteome</keyword>
<name>CINAL_DEIDV</name>
<protein>
    <recommendedName>
        <fullName evidence="1">CinA-like protein</fullName>
    </recommendedName>
</protein>
<organism>
    <name type="scientific">Deinococcus deserti (strain DSM 17065 / CIP 109153 / LMG 22923 / VCD115)</name>
    <dbReference type="NCBI Taxonomy" id="546414"/>
    <lineage>
        <taxon>Bacteria</taxon>
        <taxon>Thermotogati</taxon>
        <taxon>Deinococcota</taxon>
        <taxon>Deinococci</taxon>
        <taxon>Deinococcales</taxon>
        <taxon>Deinococcaceae</taxon>
        <taxon>Deinococcus</taxon>
    </lineage>
</organism>
<gene>
    <name type="ordered locus">Deide_19430</name>
</gene>
<proteinExistence type="inferred from homology"/>
<sequence>MLLAEIISVGTELLFGEIVDSNAAFLARELGARGLTLHRKTVLGDNLERVTQAIGLALSRADLVILGGGLGPTDDDLTREAIAAALNETPTEDPGLISWLEGLYTSRGRVMPQINRKQAWLIPSAEALPNPVGTAPGWYVRTAGNKVIVALPGPPREMQTMWREEVLPRLPLPTRALHATTLHTQGIGESQLAELLGELTRQANPSVATYARKTGVDVRVAASADTPEAARELAAPVLDQVRQTLARWLWGEDTDTLAGAVTRALDSRTLGVIEAGSAGALCTLLADEPTFLDAAVTQDHRRLITLGLTPVTLHAQGLVSEQAARELAAGAREHLGAEVGLAVVTAVQGERAGQAYVALDTGNAQHTAALNWPGNAEQIRERAAVLALALAQRSLTRQEVLA</sequence>
<evidence type="ECO:0000255" key="1">
    <source>
        <dbReference type="HAMAP-Rule" id="MF_00226"/>
    </source>
</evidence>